<gene>
    <name evidence="1" type="primary">ureD</name>
</gene>
<keyword id="KW-0143">Chaperone</keyword>
<keyword id="KW-0963">Cytoplasm</keyword>
<keyword id="KW-0996">Nickel insertion</keyword>
<sequence length="271" mass="30947">MKCTGVLQLSAAKKRQKTIISSCYHEGALKVSRPIYLEKDLPFLYLIHVGGGYVDGDVYLTNLDVEEEAELAVTTQSATKVYKTPKKPVVQQTNIHLKKGSVLEYLLDPLISYKGARFIQETTVHIEEDSGFFYSDVITPGWAEDGSLFPYDWIRSKLKVYKKDRLVLFDHLRLEPDEDMSGMLQMDGYTHIGTFLIFHQKADKTFLDRLYDEMEAFDSDVRFGMTSLPASGIILRILARSTGIIENMISRAHSFARRELLGKNGVTWRKY</sequence>
<feature type="chain" id="PRO_0000067606" description="Urease accessory protein UreD">
    <location>
        <begin position="1"/>
        <end position="271"/>
    </location>
</feature>
<accession>Q07400</accession>
<comment type="function">
    <text evidence="1">Required for maturation of urease via the functional incorporation of the urease nickel metallocenter.</text>
</comment>
<comment type="subunit">
    <text evidence="1">UreD, UreF and UreG form a complex that acts as a GTP-hydrolysis-dependent molecular chaperone, activating the urease apoprotein by helping to assemble the nickel containing metallocenter of UreC. The UreE protein probably delivers the nickel.</text>
</comment>
<comment type="subcellular location">
    <subcellularLocation>
        <location evidence="1">Cytoplasm</location>
    </subcellularLocation>
</comment>
<comment type="similarity">
    <text evidence="1">Belongs to the UreD family.</text>
</comment>
<reference key="1">
    <citation type="journal article" date="1994" name="J. Bacteriol.">
        <title>Cloning, sequencing, and expression of thermophilic Bacillus sp. strain TB-90 urease gene complex in Escherichia coli.</title>
        <authorList>
            <person name="Maeda M."/>
            <person name="Hidaka M."/>
            <person name="Nakamura A."/>
            <person name="Masaki H."/>
            <person name="Uozumi T."/>
        </authorList>
    </citation>
    <scope>NUCLEOTIDE SEQUENCE [GENOMIC DNA]</scope>
</reference>
<evidence type="ECO:0000255" key="1">
    <source>
        <dbReference type="HAMAP-Rule" id="MF_01384"/>
    </source>
</evidence>
<name>URED_BACSB</name>
<proteinExistence type="inferred from homology"/>
<dbReference type="EMBL" id="D14439">
    <property type="protein sequence ID" value="BAA03329.1"/>
    <property type="molecule type" value="Genomic_DNA"/>
</dbReference>
<dbReference type="PIR" id="G36950">
    <property type="entry name" value="G36950"/>
</dbReference>
<dbReference type="SMR" id="Q07400"/>
<dbReference type="GO" id="GO:0005737">
    <property type="term" value="C:cytoplasm"/>
    <property type="evidence" value="ECO:0007669"/>
    <property type="project" value="UniProtKB-SubCell"/>
</dbReference>
<dbReference type="GO" id="GO:0016151">
    <property type="term" value="F:nickel cation binding"/>
    <property type="evidence" value="ECO:0007669"/>
    <property type="project" value="UniProtKB-UniRule"/>
</dbReference>
<dbReference type="HAMAP" id="MF_01384">
    <property type="entry name" value="UreD"/>
    <property type="match status" value="1"/>
</dbReference>
<dbReference type="InterPro" id="IPR002669">
    <property type="entry name" value="UreD"/>
</dbReference>
<dbReference type="PANTHER" id="PTHR33643">
    <property type="entry name" value="UREASE ACCESSORY PROTEIN D"/>
    <property type="match status" value="1"/>
</dbReference>
<dbReference type="PANTHER" id="PTHR33643:SF1">
    <property type="entry name" value="UREASE ACCESSORY PROTEIN D"/>
    <property type="match status" value="1"/>
</dbReference>
<dbReference type="Pfam" id="PF01774">
    <property type="entry name" value="UreD"/>
    <property type="match status" value="1"/>
</dbReference>
<protein>
    <recommendedName>
        <fullName evidence="1">Urease accessory protein UreD</fullName>
    </recommendedName>
</protein>
<organism>
    <name type="scientific">Bacillus sp. (strain TB-90)</name>
    <dbReference type="NCBI Taxonomy" id="36824"/>
    <lineage>
        <taxon>Bacteria</taxon>
        <taxon>Bacillati</taxon>
        <taxon>Bacillota</taxon>
        <taxon>Bacilli</taxon>
        <taxon>Bacillales</taxon>
        <taxon>Bacillaceae</taxon>
        <taxon>Bacillus</taxon>
    </lineage>
</organism>